<organism>
    <name type="scientific">Hordeum vulgare</name>
    <name type="common">Barley</name>
    <dbReference type="NCBI Taxonomy" id="4513"/>
    <lineage>
        <taxon>Eukaryota</taxon>
        <taxon>Viridiplantae</taxon>
        <taxon>Streptophyta</taxon>
        <taxon>Embryophyta</taxon>
        <taxon>Tracheophyta</taxon>
        <taxon>Spermatophyta</taxon>
        <taxon>Magnoliopsida</taxon>
        <taxon>Liliopsida</taxon>
        <taxon>Poales</taxon>
        <taxon>Poaceae</taxon>
        <taxon>BOP clade</taxon>
        <taxon>Pooideae</taxon>
        <taxon>Triticodae</taxon>
        <taxon>Triticeae</taxon>
        <taxon>Hordeinae</taxon>
        <taxon>Hordeum</taxon>
    </lineage>
</organism>
<name>SPZX_HORVU</name>
<reference key="1">
    <citation type="journal article" date="1993" name="Biochim. Biophys. Acta">
        <title>A gene coding for a new plant serpin.</title>
        <authorList>
            <person name="Rasmussen S.K."/>
        </authorList>
    </citation>
    <scope>NUCLEOTIDE SEQUENCE [GENOMIC DNA]</scope>
</reference>
<reference key="2">
    <citation type="journal article" date="1996" name="J. Biol. Chem.">
        <title>Heterologous expression of three plant serpins with distinct inhibitory specificities.</title>
        <authorList>
            <person name="Dahl S.W."/>
            <person name="Rasmussen S.K."/>
            <person name="Hejgaard J."/>
        </authorList>
    </citation>
    <scope>PARTIAL PROTEIN SEQUENCE</scope>
    <scope>FUNCTION</scope>
</reference>
<reference key="3">
    <citation type="journal article" date="2003" name="J. Exp. Bot.">
        <title>Differential gene expression for suicide-substrate serine proteinase inhibitors (serpins) in vegetative and grain tissues of barley.</title>
        <authorList>
            <person name="Roberts T.H."/>
            <person name="Marttila S."/>
            <person name="Rasmussen S.K."/>
            <person name="Hejgaard J."/>
        </authorList>
    </citation>
    <scope>TISSUE SPECIFICITY</scope>
</reference>
<keyword id="KW-0903">Direct protein sequencing</keyword>
<keyword id="KW-0646">Protease inhibitor</keyword>
<keyword id="KW-0722">Serine protease inhibitor</keyword>
<accession>Q40066</accession>
<dbReference type="EMBL" id="Z15116">
    <property type="protein sequence ID" value="CAA78822.1"/>
    <property type="molecule type" value="Genomic_DNA"/>
</dbReference>
<dbReference type="PIR" id="S29819">
    <property type="entry name" value="S29819"/>
</dbReference>
<dbReference type="SMR" id="Q40066"/>
<dbReference type="MEROPS" id="I04.032"/>
<dbReference type="ExpressionAtlas" id="Q40066">
    <property type="expression patterns" value="baseline and differential"/>
</dbReference>
<dbReference type="GO" id="GO:0005615">
    <property type="term" value="C:extracellular space"/>
    <property type="evidence" value="ECO:0007669"/>
    <property type="project" value="InterPro"/>
</dbReference>
<dbReference type="GO" id="GO:0004867">
    <property type="term" value="F:serine-type endopeptidase inhibitor activity"/>
    <property type="evidence" value="ECO:0007669"/>
    <property type="project" value="UniProtKB-KW"/>
</dbReference>
<dbReference type="CDD" id="cd02043">
    <property type="entry name" value="serpinP_plants"/>
    <property type="match status" value="1"/>
</dbReference>
<dbReference type="Gene3D" id="2.30.39.10">
    <property type="entry name" value="Alpha-1-antitrypsin, domain 1"/>
    <property type="match status" value="1"/>
</dbReference>
<dbReference type="Gene3D" id="3.30.497.10">
    <property type="entry name" value="Antithrombin, subunit I, domain 2"/>
    <property type="match status" value="1"/>
</dbReference>
<dbReference type="InterPro" id="IPR023795">
    <property type="entry name" value="Serpin_CS"/>
</dbReference>
<dbReference type="InterPro" id="IPR023796">
    <property type="entry name" value="Serpin_dom"/>
</dbReference>
<dbReference type="InterPro" id="IPR000215">
    <property type="entry name" value="Serpin_fam"/>
</dbReference>
<dbReference type="InterPro" id="IPR036186">
    <property type="entry name" value="Serpin_sf"/>
</dbReference>
<dbReference type="InterPro" id="IPR042178">
    <property type="entry name" value="Serpin_sf_1"/>
</dbReference>
<dbReference type="InterPro" id="IPR042185">
    <property type="entry name" value="Serpin_sf_2"/>
</dbReference>
<dbReference type="PANTHER" id="PTHR11461:SF211">
    <property type="entry name" value="GH10112P-RELATED"/>
    <property type="match status" value="1"/>
</dbReference>
<dbReference type="PANTHER" id="PTHR11461">
    <property type="entry name" value="SERINE PROTEASE INHIBITOR, SERPIN"/>
    <property type="match status" value="1"/>
</dbReference>
<dbReference type="Pfam" id="PF00079">
    <property type="entry name" value="Serpin"/>
    <property type="match status" value="1"/>
</dbReference>
<dbReference type="SMART" id="SM00093">
    <property type="entry name" value="SERPIN"/>
    <property type="match status" value="1"/>
</dbReference>
<dbReference type="SUPFAM" id="SSF56574">
    <property type="entry name" value="Serpins"/>
    <property type="match status" value="1"/>
</dbReference>
<dbReference type="PROSITE" id="PS00284">
    <property type="entry name" value="SERPIN"/>
    <property type="match status" value="1"/>
</dbReference>
<evidence type="ECO:0000250" key="1"/>
<evidence type="ECO:0000269" key="2">
    <source>
    </source>
</evidence>
<evidence type="ECO:0000269" key="3">
    <source>
    </source>
</evidence>
<evidence type="ECO:0000305" key="4"/>
<comment type="function">
    <text evidence="3">Inhibits chymotrypsin, cathepsin G and trypsin in vitro.</text>
</comment>
<comment type="tissue specificity">
    <text evidence="2">Expressed in roots, coleoptiles, shoots, leaves, embryo and endosperm.</text>
</comment>
<comment type="domain">
    <text evidence="1">The reactive center loop (RCL) extends out from the body of the protein and directs binding to the target protease. The protease cleaves the serpin at the reactive site within the RCL, establishing a covalent linkage between the carboxyl group of the serpin reactive site and the serine hydroxyl of the protease. The resulting inactive serpin-protease complex is highly stable (By similarity).</text>
</comment>
<comment type="similarity">
    <text evidence="4">Belongs to the serpin family.</text>
</comment>
<sequence>MATTDIRLSIAHQTRFAVRLASAISSPSHAKGSSGNAAFSPLSLHVALSLVAAGAAATRDQLAATLGAAEKGDAEGLHALAEQVVQVVLADASGAGGPRSFANVFVDSSLKLKPSFKDLVVGKYKGETQSVDFQTKAPEVAGQVNSWVEKITTGLIKEILPAGSVDSTTRLVLGNALYFKGSWTEKFDASKTKDEKFHLLDGSSVQTPFMSSTKKQYISSYDSLKVLKLPYQQGGDKRQFSMYILLPEAQDGLWNLANKLSTEPEFMEKHMPMQKVPVGQFKLPKFKISFGFEASDMLKGLGLQLPFSSEADLSEMVDSPAARSLYVSSVFHKSFVEVNEEGTEAAARTARVVTLRSLPVEPVKVDFVADHPFLFLIREDLTGVVLFVGHVFNPLVSA</sequence>
<protein>
    <recommendedName>
        <fullName>Serpin-ZX</fullName>
    </recommendedName>
    <alternativeName>
        <fullName>BSZx</fullName>
    </alternativeName>
    <alternativeName>
        <fullName>HorvuZx</fullName>
    </alternativeName>
</protein>
<proteinExistence type="evidence at protein level"/>
<feature type="chain" id="PRO_0000334567" description="Serpin-ZX">
    <location>
        <begin position="1"/>
        <end position="398"/>
    </location>
</feature>
<feature type="region of interest" description="RCL">
    <location>
        <begin position="342"/>
        <end position="366"/>
    </location>
</feature>
<feature type="site" description="Reactive bond">
    <location>
        <begin position="356"/>
        <end position="357"/>
    </location>
</feature>
<gene>
    <name type="primary">PAZX</name>
</gene>